<evidence type="ECO:0000250" key="1">
    <source>
        <dbReference type="UniProtKB" id="O94788"/>
    </source>
</evidence>
<evidence type="ECO:0000250" key="2">
    <source>
        <dbReference type="UniProtKB" id="Q62148"/>
    </source>
</evidence>
<evidence type="ECO:0000269" key="3">
    <source>
    </source>
</evidence>
<evidence type="ECO:0000269" key="4">
    <source>
    </source>
</evidence>
<evidence type="ECO:0000303" key="5">
    <source>
    </source>
</evidence>
<evidence type="ECO:0000305" key="6"/>
<evidence type="ECO:0007744" key="7">
    <source>
        <dbReference type="PDB" id="1BI9"/>
    </source>
</evidence>
<evidence type="ECO:0007829" key="8">
    <source>
        <dbReference type="PDB" id="1BI9"/>
    </source>
</evidence>
<proteinExistence type="evidence at protein level"/>
<sequence>MTSSEIAMPGEVKADPAALMASLQLLPSPTPNLEIKYTKIFINNEWQNSESGRVFPVCNPATGEQVCEVQEADKVDIDKAVQAARLAFSLGSVWRRMDASERGRLLDKLADLVERDRATLATMESLNGGKPFLQAFYIDLQGVIKTLRYYAGWADKIHGMTIPVDGDYFTFTRHEPIGVCGQIIPWNFPLLMFTWKIAPALCCGNTVVIKPAEQTPLSALYMGALIKEAGFPPGVVNILPGYGPTAGAAIASHIGIDKIAFTGSTEVGKLIQEAAGRSNLKRVTLELGGKSPNIIFADADLDYAVEQAHQGVFFNQGQCCTAGSRIFVEESIYEEFVKRSVERAKRRIVGSPFDPTTEQGPQIDKKQYNKILELIQSGVAEGAKLECGGKGLGRKGFFIEPTVFSNVTDDMRIAKEEIFGPVQEILRFKTMDEVIERANNSDFGLVAAVFTNDINKALMVSSAMQAGTVWINCYNALNAQSPFGGFKMSGNGREMGEFGLREYSEVKTVTVKIPQKNS</sequence>
<name>AL1A2_RAT</name>
<feature type="chain" id="PRO_0000056424" description="Retinal dehydrogenase 2">
    <location>
        <begin position="1"/>
        <end position="518"/>
    </location>
</feature>
<feature type="active site" description="Proton acceptor">
    <location>
        <position position="286"/>
    </location>
</feature>
<feature type="active site" description="Nucleophile">
    <location>
        <position position="320"/>
    </location>
</feature>
<feature type="binding site" evidence="3 7">
    <location>
        <begin position="184"/>
        <end position="186"/>
    </location>
    <ligand>
        <name>NAD(+)</name>
        <dbReference type="ChEBI" id="CHEBI:57540"/>
    </ligand>
</feature>
<feature type="binding site" evidence="3 7">
    <location>
        <begin position="210"/>
        <end position="213"/>
    </location>
    <ligand>
        <name>NAD(+)</name>
        <dbReference type="ChEBI" id="CHEBI:57540"/>
    </ligand>
</feature>
<feature type="binding site" evidence="1">
    <location>
        <begin position="264"/>
        <end position="266"/>
    </location>
    <ligand>
        <name>NAD(+)</name>
        <dbReference type="ChEBI" id="CHEBI:57540"/>
    </ligand>
</feature>
<feature type="binding site" evidence="1">
    <location>
        <begin position="366"/>
        <end position="370"/>
    </location>
    <ligand>
        <name>NAD(+)</name>
        <dbReference type="ChEBI" id="CHEBI:57540"/>
    </ligand>
</feature>
<feature type="binding site" evidence="1">
    <location>
        <position position="417"/>
    </location>
    <ligand>
        <name>NAD(+)</name>
        <dbReference type="ChEBI" id="CHEBI:57540"/>
    </ligand>
</feature>
<feature type="site" description="Transition state stabilizer">
    <location>
        <position position="187"/>
    </location>
</feature>
<feature type="modified residue" description="Phosphotyrosine" evidence="1">
    <location>
        <position position="168"/>
    </location>
</feature>
<feature type="modified residue" description="Phosphoserine" evidence="1">
    <location>
        <position position="351"/>
    </location>
</feature>
<feature type="strand" evidence="8">
    <location>
        <begin position="39"/>
        <end position="42"/>
    </location>
</feature>
<feature type="strand" evidence="8">
    <location>
        <begin position="45"/>
        <end position="47"/>
    </location>
</feature>
<feature type="strand" evidence="8">
    <location>
        <begin position="54"/>
        <end position="58"/>
    </location>
</feature>
<feature type="turn" evidence="8">
    <location>
        <begin position="60"/>
        <end position="62"/>
    </location>
</feature>
<feature type="strand" evidence="8">
    <location>
        <begin position="65"/>
        <end position="70"/>
    </location>
</feature>
<feature type="helix" evidence="8">
    <location>
        <begin position="74"/>
        <end position="88"/>
    </location>
</feature>
<feature type="strand" evidence="8">
    <location>
        <begin position="89"/>
        <end position="91"/>
    </location>
</feature>
<feature type="helix" evidence="8">
    <location>
        <begin position="93"/>
        <end position="96"/>
    </location>
</feature>
<feature type="helix" evidence="8">
    <location>
        <begin position="99"/>
        <end position="115"/>
    </location>
</feature>
<feature type="helix" evidence="8">
    <location>
        <begin position="117"/>
        <end position="128"/>
    </location>
</feature>
<feature type="helix" evidence="8">
    <location>
        <begin position="132"/>
        <end position="137"/>
    </location>
</feature>
<feature type="helix" evidence="8">
    <location>
        <begin position="139"/>
        <end position="151"/>
    </location>
</feature>
<feature type="turn" evidence="8">
    <location>
        <begin position="152"/>
        <end position="155"/>
    </location>
</feature>
<feature type="strand" evidence="8">
    <location>
        <begin position="159"/>
        <end position="162"/>
    </location>
</feature>
<feature type="strand" evidence="8">
    <location>
        <begin position="165"/>
        <end position="176"/>
    </location>
</feature>
<feature type="strand" evidence="8">
    <location>
        <begin position="179"/>
        <end position="183"/>
    </location>
</feature>
<feature type="strand" evidence="8">
    <location>
        <begin position="186"/>
        <end position="188"/>
    </location>
</feature>
<feature type="helix" evidence="8">
    <location>
        <begin position="189"/>
        <end position="202"/>
    </location>
</feature>
<feature type="strand" evidence="8">
    <location>
        <begin position="206"/>
        <end position="210"/>
    </location>
</feature>
<feature type="helix" evidence="8">
    <location>
        <begin position="217"/>
        <end position="229"/>
    </location>
</feature>
<feature type="strand" evidence="8">
    <location>
        <begin position="235"/>
        <end position="238"/>
    </location>
</feature>
<feature type="turn" evidence="8">
    <location>
        <begin position="243"/>
        <end position="245"/>
    </location>
</feature>
<feature type="helix" evidence="8">
    <location>
        <begin position="246"/>
        <end position="252"/>
    </location>
</feature>
<feature type="strand" evidence="8">
    <location>
        <begin position="258"/>
        <end position="263"/>
    </location>
</feature>
<feature type="helix" evidence="8">
    <location>
        <begin position="265"/>
        <end position="277"/>
    </location>
</feature>
<feature type="strand" evidence="8">
    <location>
        <begin position="282"/>
        <end position="286"/>
    </location>
</feature>
<feature type="strand" evidence="8">
    <location>
        <begin position="293"/>
        <end position="295"/>
    </location>
</feature>
<feature type="helix" evidence="8">
    <location>
        <begin position="301"/>
        <end position="313"/>
    </location>
</feature>
<feature type="helix" evidence="8">
    <location>
        <begin position="314"/>
        <end position="317"/>
    </location>
</feature>
<feature type="strand" evidence="8">
    <location>
        <begin position="326"/>
        <end position="329"/>
    </location>
</feature>
<feature type="helix" evidence="8">
    <location>
        <begin position="330"/>
        <end position="346"/>
    </location>
</feature>
<feature type="helix" evidence="8">
    <location>
        <begin position="365"/>
        <end position="379"/>
    </location>
</feature>
<feature type="turn" evidence="8">
    <location>
        <begin position="380"/>
        <end position="382"/>
    </location>
</feature>
<feature type="strand" evidence="8">
    <location>
        <begin position="384"/>
        <end position="387"/>
    </location>
</feature>
<feature type="strand" evidence="8">
    <location>
        <begin position="393"/>
        <end position="396"/>
    </location>
</feature>
<feature type="strand" evidence="8">
    <location>
        <begin position="402"/>
        <end position="406"/>
    </location>
</feature>
<feature type="helix" evidence="8">
    <location>
        <begin position="412"/>
        <end position="415"/>
    </location>
</feature>
<feature type="strand" evidence="8">
    <location>
        <begin position="420"/>
        <end position="428"/>
    </location>
</feature>
<feature type="helix" evidence="8">
    <location>
        <begin position="431"/>
        <end position="439"/>
    </location>
</feature>
<feature type="strand" evidence="8">
    <location>
        <begin position="445"/>
        <end position="450"/>
    </location>
</feature>
<feature type="helix" evidence="8">
    <location>
        <begin position="454"/>
        <end position="463"/>
    </location>
</feature>
<feature type="strand" evidence="8">
    <location>
        <begin position="467"/>
        <end position="472"/>
    </location>
</feature>
<feature type="helix" evidence="8">
    <location>
        <begin position="499"/>
        <end position="501"/>
    </location>
</feature>
<feature type="strand" evidence="8">
    <location>
        <begin position="504"/>
        <end position="512"/>
    </location>
</feature>
<protein>
    <recommendedName>
        <fullName evidence="5">Retinal dehydrogenase 2</fullName>
        <shortName evidence="5">RALDH 2</shortName>
        <shortName evidence="5">RalDH2</shortName>
        <ecNumber evidence="4">1.2.1.36</ecNumber>
    </recommendedName>
    <alternativeName>
        <fullName>Aldehyde dehydrogenase family 1 member A2</fullName>
        <shortName>ALDH1A2</shortName>
    </alternativeName>
    <alternativeName>
        <fullName>Retinaldehyde-specific dehydrogenase type 2</fullName>
        <shortName evidence="5">RALDH(II)</shortName>
    </alternativeName>
</protein>
<keyword id="KW-0002">3D-structure</keyword>
<keyword id="KW-0963">Cytoplasm</keyword>
<keyword id="KW-0443">Lipid metabolism</keyword>
<keyword id="KW-0520">NAD</keyword>
<keyword id="KW-0560">Oxidoreductase</keyword>
<keyword id="KW-0597">Phosphoprotein</keyword>
<keyword id="KW-1185">Reference proteome</keyword>
<organism>
    <name type="scientific">Rattus norvegicus</name>
    <name type="common">Rat</name>
    <dbReference type="NCBI Taxonomy" id="10116"/>
    <lineage>
        <taxon>Eukaryota</taxon>
        <taxon>Metazoa</taxon>
        <taxon>Chordata</taxon>
        <taxon>Craniata</taxon>
        <taxon>Vertebrata</taxon>
        <taxon>Euteleostomi</taxon>
        <taxon>Mammalia</taxon>
        <taxon>Eutheria</taxon>
        <taxon>Euarchontoglires</taxon>
        <taxon>Glires</taxon>
        <taxon>Rodentia</taxon>
        <taxon>Myomorpha</taxon>
        <taxon>Muroidea</taxon>
        <taxon>Muridae</taxon>
        <taxon>Murinae</taxon>
        <taxon>Rattus</taxon>
    </lineage>
</organism>
<accession>Q63639</accession>
<accession>Q4FZY8</accession>
<dbReference type="EC" id="1.2.1.36" evidence="4"/>
<dbReference type="EMBL" id="BC098910">
    <property type="protein sequence ID" value="AAH98910.1"/>
    <property type="molecule type" value="mRNA"/>
</dbReference>
<dbReference type="EMBL" id="U60063">
    <property type="protein sequence ID" value="AAC52637.1"/>
    <property type="status" value="ALT_INIT"/>
    <property type="molecule type" value="mRNA"/>
</dbReference>
<dbReference type="RefSeq" id="NP_446348.2">
    <property type="nucleotide sequence ID" value="NM_053896.2"/>
</dbReference>
<dbReference type="PDB" id="1BI9">
    <property type="method" value="X-ray"/>
    <property type="resolution" value="2.70 A"/>
    <property type="chains" value="A/B/C/D=20-518"/>
</dbReference>
<dbReference type="PDBsum" id="1BI9"/>
<dbReference type="SMR" id="Q63639"/>
<dbReference type="FunCoup" id="Q63639">
    <property type="interactions" value="268"/>
</dbReference>
<dbReference type="STRING" id="10116.ENSRNOP00000073203"/>
<dbReference type="GlyGen" id="Q63639">
    <property type="glycosylation" value="2 sites"/>
</dbReference>
<dbReference type="PhosphoSitePlus" id="Q63639"/>
<dbReference type="PaxDb" id="10116-ENSRNOP00000021757"/>
<dbReference type="Ensembl" id="ENSRNOT00000079115.2">
    <property type="protein sequence ID" value="ENSRNOP00000073203.1"/>
    <property type="gene ID" value="ENSRNOG00000055049.2"/>
</dbReference>
<dbReference type="GeneID" id="116676"/>
<dbReference type="KEGG" id="rno:116676"/>
<dbReference type="UCSC" id="RGD:620250">
    <property type="organism name" value="rat"/>
</dbReference>
<dbReference type="AGR" id="RGD:620250"/>
<dbReference type="CTD" id="8854"/>
<dbReference type="RGD" id="620250">
    <property type="gene designation" value="Aldh1a2"/>
</dbReference>
<dbReference type="eggNOG" id="KOG2450">
    <property type="taxonomic scope" value="Eukaryota"/>
</dbReference>
<dbReference type="GeneTree" id="ENSGT00940000158898"/>
<dbReference type="HOGENOM" id="CLU_005391_0_1_1"/>
<dbReference type="InParanoid" id="Q63639"/>
<dbReference type="OMA" id="WSNTFNK"/>
<dbReference type="OrthoDB" id="310895at2759"/>
<dbReference type="PhylomeDB" id="Q63639"/>
<dbReference type="TreeFam" id="TF300455"/>
<dbReference type="BRENDA" id="1.2.1.36">
    <property type="organism ID" value="5301"/>
</dbReference>
<dbReference type="Reactome" id="R-RNO-5365859">
    <property type="pathway name" value="RA biosynthesis pathway"/>
</dbReference>
<dbReference type="UniPathway" id="UPA00912"/>
<dbReference type="EvolutionaryTrace" id="Q63639"/>
<dbReference type="PRO" id="PR:Q63639"/>
<dbReference type="Proteomes" id="UP000002494">
    <property type="component" value="Chromosome 8"/>
</dbReference>
<dbReference type="Bgee" id="ENSRNOG00000055049">
    <property type="expression patterns" value="Expressed in testis and 19 other cell types or tissues"/>
</dbReference>
<dbReference type="GO" id="GO:0005737">
    <property type="term" value="C:cytoplasm"/>
    <property type="evidence" value="ECO:0000266"/>
    <property type="project" value="RGD"/>
</dbReference>
<dbReference type="GO" id="GO:0048471">
    <property type="term" value="C:perinuclear region of cytoplasm"/>
    <property type="evidence" value="ECO:0000314"/>
    <property type="project" value="RGD"/>
</dbReference>
<dbReference type="GO" id="GO:0004028">
    <property type="term" value="F:3-chloroallyl aldehyde dehydrogenase activity"/>
    <property type="evidence" value="ECO:0000266"/>
    <property type="project" value="RGD"/>
</dbReference>
<dbReference type="GO" id="GO:0004029">
    <property type="term" value="F:aldehyde dehydrogenase (NAD+) activity"/>
    <property type="evidence" value="ECO:0000318"/>
    <property type="project" value="GO_Central"/>
</dbReference>
<dbReference type="GO" id="GO:0016918">
    <property type="term" value="F:retinal binding"/>
    <property type="evidence" value="ECO:0000314"/>
    <property type="project" value="RGD"/>
</dbReference>
<dbReference type="GO" id="GO:0001758">
    <property type="term" value="F:retinal dehydrogenase activity"/>
    <property type="evidence" value="ECO:0000314"/>
    <property type="project" value="RGD"/>
</dbReference>
<dbReference type="GO" id="GO:0042904">
    <property type="term" value="P:9-cis-retinoic acid biosynthetic process"/>
    <property type="evidence" value="ECO:0000266"/>
    <property type="project" value="RGD"/>
</dbReference>
<dbReference type="GO" id="GO:0009952">
    <property type="term" value="P:anterior/posterior pattern specification"/>
    <property type="evidence" value="ECO:0000266"/>
    <property type="project" value="RGD"/>
</dbReference>
<dbReference type="GO" id="GO:0001568">
    <property type="term" value="P:blood vessel development"/>
    <property type="evidence" value="ECO:0000266"/>
    <property type="project" value="RGD"/>
</dbReference>
<dbReference type="GO" id="GO:0043010">
    <property type="term" value="P:camera-type eye development"/>
    <property type="evidence" value="ECO:0000266"/>
    <property type="project" value="RGD"/>
</dbReference>
<dbReference type="GO" id="GO:0048738">
    <property type="term" value="P:cardiac muscle tissue development"/>
    <property type="evidence" value="ECO:0000266"/>
    <property type="project" value="RGD"/>
</dbReference>
<dbReference type="GO" id="GO:0008283">
    <property type="term" value="P:cell population proliferation"/>
    <property type="evidence" value="ECO:0000266"/>
    <property type="project" value="RGD"/>
</dbReference>
<dbReference type="GO" id="GO:0071300">
    <property type="term" value="P:cellular response to retinoic acid"/>
    <property type="evidence" value="ECO:0000266"/>
    <property type="project" value="RGD"/>
</dbReference>
<dbReference type="GO" id="GO:0009855">
    <property type="term" value="P:determination of bilateral symmetry"/>
    <property type="evidence" value="ECO:0000266"/>
    <property type="project" value="RGD"/>
</dbReference>
<dbReference type="GO" id="GO:0031076">
    <property type="term" value="P:embryonic camera-type eye development"/>
    <property type="evidence" value="ECO:0000266"/>
    <property type="project" value="RGD"/>
</dbReference>
<dbReference type="GO" id="GO:0048566">
    <property type="term" value="P:embryonic digestive tract development"/>
    <property type="evidence" value="ECO:0000266"/>
    <property type="project" value="RGD"/>
</dbReference>
<dbReference type="GO" id="GO:0035115">
    <property type="term" value="P:embryonic forelimb morphogenesis"/>
    <property type="evidence" value="ECO:0000266"/>
    <property type="project" value="RGD"/>
</dbReference>
<dbReference type="GO" id="GO:0030326">
    <property type="term" value="P:embryonic limb morphogenesis"/>
    <property type="evidence" value="ECO:0000266"/>
    <property type="project" value="RGD"/>
</dbReference>
<dbReference type="GO" id="GO:0060324">
    <property type="term" value="P:face development"/>
    <property type="evidence" value="ECO:0000266"/>
    <property type="project" value="RGD"/>
</dbReference>
<dbReference type="GO" id="GO:0030900">
    <property type="term" value="P:forebrain development"/>
    <property type="evidence" value="ECO:0000266"/>
    <property type="project" value="RGD"/>
</dbReference>
<dbReference type="GO" id="GO:0003007">
    <property type="term" value="P:heart morphogenesis"/>
    <property type="evidence" value="ECO:0000266"/>
    <property type="project" value="RGD"/>
</dbReference>
<dbReference type="GO" id="GO:0030902">
    <property type="term" value="P:hindbrain development"/>
    <property type="evidence" value="ECO:0000266"/>
    <property type="project" value="RGD"/>
</dbReference>
<dbReference type="GO" id="GO:0001822">
    <property type="term" value="P:kidney development"/>
    <property type="evidence" value="ECO:0000270"/>
    <property type="project" value="RGD"/>
</dbReference>
<dbReference type="GO" id="GO:0001889">
    <property type="term" value="P:liver development"/>
    <property type="evidence" value="ECO:0000270"/>
    <property type="project" value="RGD"/>
</dbReference>
<dbReference type="GO" id="GO:0030324">
    <property type="term" value="P:lung development"/>
    <property type="evidence" value="ECO:0000266"/>
    <property type="project" value="RGD"/>
</dbReference>
<dbReference type="GO" id="GO:0007494">
    <property type="term" value="P:midgut development"/>
    <property type="evidence" value="ECO:0000270"/>
    <property type="project" value="RGD"/>
</dbReference>
<dbReference type="GO" id="GO:0016331">
    <property type="term" value="P:morphogenesis of embryonic epithelium"/>
    <property type="evidence" value="ECO:0000266"/>
    <property type="project" value="RGD"/>
</dbReference>
<dbReference type="GO" id="GO:0008285">
    <property type="term" value="P:negative regulation of cell population proliferation"/>
    <property type="evidence" value="ECO:0000266"/>
    <property type="project" value="RGD"/>
</dbReference>
<dbReference type="GO" id="GO:0014032">
    <property type="term" value="P:neural crest cell development"/>
    <property type="evidence" value="ECO:0000266"/>
    <property type="project" value="RGD"/>
</dbReference>
<dbReference type="GO" id="GO:0021915">
    <property type="term" value="P:neural tube development"/>
    <property type="evidence" value="ECO:0000266"/>
    <property type="project" value="RGD"/>
</dbReference>
<dbReference type="GO" id="GO:0030182">
    <property type="term" value="P:neuron differentiation"/>
    <property type="evidence" value="ECO:0000266"/>
    <property type="project" value="RGD"/>
</dbReference>
<dbReference type="GO" id="GO:0031016">
    <property type="term" value="P:pancreas development"/>
    <property type="evidence" value="ECO:0000266"/>
    <property type="project" value="RGD"/>
</dbReference>
<dbReference type="GO" id="GO:0021983">
    <property type="term" value="P:pituitary gland development"/>
    <property type="evidence" value="ECO:0000270"/>
    <property type="project" value="RGD"/>
</dbReference>
<dbReference type="GO" id="GO:0043065">
    <property type="term" value="P:positive regulation of apoptotic process"/>
    <property type="evidence" value="ECO:0000266"/>
    <property type="project" value="RGD"/>
</dbReference>
<dbReference type="GO" id="GO:0008284">
    <property type="term" value="P:positive regulation of cell population proliferation"/>
    <property type="evidence" value="ECO:0000266"/>
    <property type="project" value="RGD"/>
</dbReference>
<dbReference type="GO" id="GO:0010628">
    <property type="term" value="P:positive regulation of gene expression"/>
    <property type="evidence" value="ECO:0000266"/>
    <property type="project" value="RGD"/>
</dbReference>
<dbReference type="GO" id="GO:0051289">
    <property type="term" value="P:protein homotetramerization"/>
    <property type="evidence" value="ECO:0000250"/>
    <property type="project" value="UniProtKB"/>
</dbReference>
<dbReference type="GO" id="GO:0009954">
    <property type="term" value="P:proximal/distal pattern formation"/>
    <property type="evidence" value="ECO:0000266"/>
    <property type="project" value="RGD"/>
</dbReference>
<dbReference type="GO" id="GO:1905562">
    <property type="term" value="P:regulation of vascular endothelial cell proliferation"/>
    <property type="evidence" value="ECO:0000266"/>
    <property type="project" value="RGD"/>
</dbReference>
<dbReference type="GO" id="GO:0034097">
    <property type="term" value="P:response to cytokine"/>
    <property type="evidence" value="ECO:0000266"/>
    <property type="project" value="RGD"/>
</dbReference>
<dbReference type="GO" id="GO:0032355">
    <property type="term" value="P:response to estradiol"/>
    <property type="evidence" value="ECO:0000270"/>
    <property type="project" value="RGD"/>
</dbReference>
<dbReference type="GO" id="GO:0032526">
    <property type="term" value="P:response to retinoic acid"/>
    <property type="evidence" value="ECO:0000250"/>
    <property type="project" value="UniProtKB"/>
</dbReference>
<dbReference type="GO" id="GO:0033189">
    <property type="term" value="P:response to vitamin A"/>
    <property type="evidence" value="ECO:0000270"/>
    <property type="project" value="RGD"/>
</dbReference>
<dbReference type="GO" id="GO:0042574">
    <property type="term" value="P:retinal metabolic process"/>
    <property type="evidence" value="ECO:0000266"/>
    <property type="project" value="RGD"/>
</dbReference>
<dbReference type="GO" id="GO:0002138">
    <property type="term" value="P:retinoic acid biosynthetic process"/>
    <property type="evidence" value="ECO:0000315"/>
    <property type="project" value="RGD"/>
</dbReference>
<dbReference type="GO" id="GO:0042573">
    <property type="term" value="P:retinoic acid metabolic process"/>
    <property type="evidence" value="ECO:0000314"/>
    <property type="project" value="RGD"/>
</dbReference>
<dbReference type="GO" id="GO:0048384">
    <property type="term" value="P:retinoic acid receptor signaling pathway"/>
    <property type="evidence" value="ECO:0000266"/>
    <property type="project" value="RGD"/>
</dbReference>
<dbReference type="GO" id="GO:0042572">
    <property type="term" value="P:retinol metabolic process"/>
    <property type="evidence" value="ECO:0007669"/>
    <property type="project" value="UniProtKB-UniPathway"/>
</dbReference>
<dbReference type="GO" id="GO:0035799">
    <property type="term" value="P:ureter maturation"/>
    <property type="evidence" value="ECO:0000266"/>
    <property type="project" value="RGD"/>
</dbReference>
<dbReference type="CDD" id="cd07141">
    <property type="entry name" value="ALDH_F1AB_F2_RALDH1"/>
    <property type="match status" value="1"/>
</dbReference>
<dbReference type="FunFam" id="3.40.605.10:FF:000050">
    <property type="entry name" value="Aldehyde dehydrogenase, mitochondrial"/>
    <property type="match status" value="1"/>
</dbReference>
<dbReference type="FunFam" id="3.40.309.10:FF:000001">
    <property type="entry name" value="Mitochondrial aldehyde dehydrogenase 2"/>
    <property type="match status" value="1"/>
</dbReference>
<dbReference type="Gene3D" id="3.40.605.10">
    <property type="entry name" value="Aldehyde Dehydrogenase, Chain A, domain 1"/>
    <property type="match status" value="1"/>
</dbReference>
<dbReference type="Gene3D" id="3.40.309.10">
    <property type="entry name" value="Aldehyde Dehydrogenase, Chain A, domain 2"/>
    <property type="match status" value="1"/>
</dbReference>
<dbReference type="InterPro" id="IPR016161">
    <property type="entry name" value="Ald_DH/histidinol_DH"/>
</dbReference>
<dbReference type="InterPro" id="IPR016163">
    <property type="entry name" value="Ald_DH_C"/>
</dbReference>
<dbReference type="InterPro" id="IPR016160">
    <property type="entry name" value="Ald_DH_CS_CYS"/>
</dbReference>
<dbReference type="InterPro" id="IPR029510">
    <property type="entry name" value="Ald_DH_CS_GLU"/>
</dbReference>
<dbReference type="InterPro" id="IPR016162">
    <property type="entry name" value="Ald_DH_N"/>
</dbReference>
<dbReference type="InterPro" id="IPR015590">
    <property type="entry name" value="Aldehyde_DH_dom"/>
</dbReference>
<dbReference type="PANTHER" id="PTHR11699">
    <property type="entry name" value="ALDEHYDE DEHYDROGENASE-RELATED"/>
    <property type="match status" value="1"/>
</dbReference>
<dbReference type="Pfam" id="PF00171">
    <property type="entry name" value="Aldedh"/>
    <property type="match status" value="1"/>
</dbReference>
<dbReference type="SUPFAM" id="SSF53720">
    <property type="entry name" value="ALDH-like"/>
    <property type="match status" value="1"/>
</dbReference>
<dbReference type="PROSITE" id="PS00070">
    <property type="entry name" value="ALDEHYDE_DEHYDR_CYS"/>
    <property type="match status" value="1"/>
</dbReference>
<dbReference type="PROSITE" id="PS00687">
    <property type="entry name" value="ALDEHYDE_DEHYDR_GLU"/>
    <property type="match status" value="1"/>
</dbReference>
<gene>
    <name type="primary">Aldh1a2</name>
    <name type="synonym">Raldh2</name>
</gene>
<reference key="1">
    <citation type="journal article" date="2004" name="Genome Res.">
        <title>The status, quality, and expansion of the NIH full-length cDNA project: the Mammalian Gene Collection (MGC).</title>
        <authorList>
            <consortium name="The MGC Project Team"/>
        </authorList>
    </citation>
    <scope>NUCLEOTIDE SEQUENCE [LARGE SCALE MRNA]</scope>
    <source>
        <tissue>Testis</tissue>
    </source>
</reference>
<reference key="2">
    <citation type="journal article" date="1996" name="J. Biol. Chem.">
        <title>Cloning of a cDNA encoding an aldehyde dehydrogenase and its expression in Escherichia coli. Recognition of retinal as substrate.</title>
        <authorList>
            <person name="Wang X."/>
            <person name="Penzes P."/>
            <person name="Napoli J.L."/>
        </authorList>
    </citation>
    <scope>NUCLEOTIDE SEQUENCE [MRNA] OF 4-518</scope>
    <scope>FUNCTION</scope>
    <scope>CATALYTIC ACTIVITY</scope>
    <scope>BIOPHYSICOCHEMICAL PROPERTIES</scope>
    <scope>PATHWAY</scope>
    <scope>TISSUE SPECIFICITY</scope>
    <source>
        <tissue>Testis</tissue>
    </source>
</reference>
<reference key="3">
    <citation type="journal article" date="1999" name="Biochemistry">
        <title>The structure of retinal dehydrogenase type II at 2.7 A resolution: implications for retinal specificity.</title>
        <authorList>
            <person name="Lamb A.L."/>
            <person name="Newcomer M.E."/>
        </authorList>
    </citation>
    <scope>X-RAY CRYSTALLOGRAPHY (2.7 ANGSTROMS) OF 20-518 IN COMPLEX WITH NAD</scope>
</reference>
<comment type="function">
    <text evidence="2 4">Catalyzes the NAD-dependent oxidation of aldehyde substrates, such as all-trans-retinal and all-trans-13,14-dihydroretinal, to their corresponding carboxylic acids, all-trans-retinoate and all-trans-13,14-dihydroretinoate, respectively (By similarity) (PubMed:8663198). Retinoate signaling is critical for the transcriptional control of many genes, for instance it is crucial for initiation of meiosis in both male and female (By similarity). Recognizes retinal as substrate, both in its free form and when bound to cellular retinol-binding protein (PubMed:8663198). Lacks activity with benzaldehyde, acetaldehyde and octanal (PubMed:8663198). Displays complete lack of activity with citral (PubMed:8663198).</text>
</comment>
<comment type="catalytic activity">
    <reaction evidence="4">
        <text>retinal + NAD(+) + H2O = retinoate + NADH + 2 H(+)</text>
        <dbReference type="Rhea" id="RHEA:16177"/>
        <dbReference type="ChEBI" id="CHEBI:15035"/>
        <dbReference type="ChEBI" id="CHEBI:15036"/>
        <dbReference type="ChEBI" id="CHEBI:15377"/>
        <dbReference type="ChEBI" id="CHEBI:15378"/>
        <dbReference type="ChEBI" id="CHEBI:57540"/>
        <dbReference type="ChEBI" id="CHEBI:57945"/>
        <dbReference type="EC" id="1.2.1.36"/>
    </reaction>
    <physiologicalReaction direction="left-to-right" evidence="4">
        <dbReference type="Rhea" id="RHEA:16178"/>
    </physiologicalReaction>
</comment>
<comment type="catalytic activity">
    <reaction evidence="4">
        <text>all-trans-retinal + NAD(+) + H2O = all-trans-retinoate + NADH + 2 H(+)</text>
        <dbReference type="Rhea" id="RHEA:42080"/>
        <dbReference type="ChEBI" id="CHEBI:15377"/>
        <dbReference type="ChEBI" id="CHEBI:15378"/>
        <dbReference type="ChEBI" id="CHEBI:17898"/>
        <dbReference type="ChEBI" id="CHEBI:35291"/>
        <dbReference type="ChEBI" id="CHEBI:57540"/>
        <dbReference type="ChEBI" id="CHEBI:57945"/>
        <dbReference type="EC" id="1.2.1.36"/>
    </reaction>
    <physiologicalReaction direction="left-to-right" evidence="4">
        <dbReference type="Rhea" id="RHEA:42081"/>
    </physiologicalReaction>
</comment>
<comment type="catalytic activity">
    <reaction evidence="2">
        <text>all-trans-13,14-dihydroretinal + NAD(+) + H2O = all-trans-13,14-dihydroretinoate + NADH + 2 H(+)</text>
        <dbReference type="Rhea" id="RHEA:75119"/>
        <dbReference type="ChEBI" id="CHEBI:15377"/>
        <dbReference type="ChEBI" id="CHEBI:15378"/>
        <dbReference type="ChEBI" id="CHEBI:57540"/>
        <dbReference type="ChEBI" id="CHEBI:57945"/>
        <dbReference type="ChEBI" id="CHEBI:194182"/>
        <dbReference type="ChEBI" id="CHEBI:194183"/>
    </reaction>
    <physiologicalReaction direction="left-to-right" evidence="2">
        <dbReference type="Rhea" id="RHEA:75120"/>
    </physiologicalReaction>
</comment>
<comment type="biophysicochemical properties">
    <kinetics>
        <KM evidence="4">0.7 uM for free retinal</KM>
        <KM evidence="4">0.4 uM for all-trans-retinal</KM>
        <KM evidence="4">70 uM for NAD</KM>
        <KM evidence="4">400 uM for NADP</KM>
    </kinetics>
</comment>
<comment type="pathway">
    <text evidence="4">Cofactor metabolism; retinol metabolism.</text>
</comment>
<comment type="subunit">
    <text evidence="1">Homotetramer.</text>
</comment>
<comment type="subcellular location">
    <subcellularLocation>
        <location>Cytoplasm</location>
    </subcellularLocation>
</comment>
<comment type="tissue specificity">
    <text evidence="4">Found in testis and less abundantly in lung, brain, heart, liver and kidney.</text>
</comment>
<comment type="similarity">
    <text evidence="6">Belongs to the aldehyde dehydrogenase family.</text>
</comment>
<comment type="sequence caution" evidence="6">
    <conflict type="erroneous initiation">
        <sequence resource="EMBL-CDS" id="AAC52637"/>
    </conflict>
</comment>